<organism>
    <name type="scientific">Drosophila melanogaster</name>
    <name type="common">Fruit fly</name>
    <dbReference type="NCBI Taxonomy" id="7227"/>
    <lineage>
        <taxon>Eukaryota</taxon>
        <taxon>Metazoa</taxon>
        <taxon>Ecdysozoa</taxon>
        <taxon>Arthropoda</taxon>
        <taxon>Hexapoda</taxon>
        <taxon>Insecta</taxon>
        <taxon>Pterygota</taxon>
        <taxon>Neoptera</taxon>
        <taxon>Endopterygota</taxon>
        <taxon>Diptera</taxon>
        <taxon>Brachycera</taxon>
        <taxon>Muscomorpha</taxon>
        <taxon>Ephydroidea</taxon>
        <taxon>Drosophilidae</taxon>
        <taxon>Drosophila</taxon>
        <taxon>Sophophora</taxon>
    </lineage>
</organism>
<sequence length="234" mass="26424">MHSTMSVQHGLVALVLIGCLAHPWHVEACSSRTVPKPRSSISSSMSGTALPPTQAPVTSSTTMRTTTTTTPRPNITFPTYKCPETFDAWYCLNDAHCFAVKIADLPVYSCECAIGFMGQRCEYKEIDNTYLPKRPRPMLEKASIASGAMCALVFMLFVCLAFYLRFEQRAAKKAYELEQELQQEYDDDDGQCECCRNRCCPDGQEPVILERKLPYHMRLEHALMSFAIRRSNKL</sequence>
<name>SPITZ_DROME</name>
<comment type="function">
    <text evidence="6">Ligand for the EGF receptor (Gurken). Involved in a number of unrelated developmental choices, for example, dorsal-ventral axis formation, glial migration, sensory organ determination, and muscle development. It is required for photoreceptor determination.</text>
</comment>
<comment type="subunit">
    <text evidence="5">Interacts with Star via the lumenal domain.</text>
</comment>
<comment type="interaction">
    <interactant intactId="EBI-91342">
        <id>Q01083</id>
    </interactant>
    <interactant intactId="EBI-596393">
        <id>Q00805</id>
        <label>aos</label>
    </interactant>
    <organismsDiffer>false</organismsDiffer>
    <experiments>2</experiments>
</comment>
<comment type="interaction">
    <interactant intactId="EBI-91342">
        <id>Q01083</id>
    </interactant>
    <interactant intactId="EBI-197863">
        <id>P04412</id>
        <label>Egfr</label>
    </interactant>
    <organismsDiffer>false</organismsDiffer>
    <experiments>4</experiments>
</comment>
<comment type="subcellular location">
    <subcellularLocation>
        <location evidence="4">Cell membrane</location>
        <topology evidence="4">Single-pass type I membrane protein</topology>
    </subcellularLocation>
    <subcellularLocation>
        <location evidence="4">Endoplasmic reticulum membrane</location>
        <topology evidence="4">Single-pass type I membrane protein</topology>
    </subcellularLocation>
    <subcellularLocation>
        <location evidence="4">Golgi apparatus membrane</location>
        <topology evidence="4">Single-pass type I membrane protein</topology>
    </subcellularLocation>
    <text>Relocalization to the Golgi apparatus and the plasma membrane is mediated by Star. In the presence of Rhomboid, Spitz is found only in the Golgi, not at the cell surface.</text>
</comment>
<comment type="tissue specificity">
    <text>Expressed throughout the embryo.</text>
</comment>
<comment type="PTM">
    <text evidence="4">Proteolytic processing by Rhomboid occurs in the Golgi. Cleavage takes place within the transmembrane domain close to residue 144 and the active growth factor is released.</text>
</comment>
<comment type="PTM">
    <text>N-glycosylated and O-glycosylated.</text>
</comment>
<comment type="sequence caution" evidence="7">
    <conflict type="erroneous initiation">
        <sequence resource="EMBL-CDS" id="AAA28894"/>
    </conflict>
</comment>
<accession>Q01083</accession>
<accession>Q8SXE0</accession>
<accession>Q9VIT4</accession>
<proteinExistence type="evidence at protein level"/>
<feature type="signal peptide" evidence="1">
    <location>
        <begin position="1"/>
        <end position="28"/>
    </location>
</feature>
<feature type="chain" id="PRO_0000007737" description="Protein spitz">
    <location>
        <begin position="29"/>
        <end position="234"/>
    </location>
</feature>
<feature type="topological domain" description="Lumenal" evidence="1">
    <location>
        <begin position="29"/>
        <end position="143"/>
    </location>
</feature>
<feature type="transmembrane region" description="Helical" evidence="1">
    <location>
        <begin position="144"/>
        <end position="164"/>
    </location>
</feature>
<feature type="topological domain" description="Cytoplasmic" evidence="1">
    <location>
        <begin position="165"/>
        <end position="234"/>
    </location>
</feature>
<feature type="domain" description="EGF-like" evidence="2">
    <location>
        <begin position="78"/>
        <end position="122"/>
    </location>
</feature>
<feature type="region of interest" description="Disordered" evidence="3">
    <location>
        <begin position="33"/>
        <end position="71"/>
    </location>
</feature>
<feature type="compositionally biased region" description="Low complexity" evidence="3">
    <location>
        <begin position="56"/>
        <end position="71"/>
    </location>
</feature>
<feature type="glycosylation site" description="N-linked (GlcNAc...) asparagine">
    <location>
        <position position="74"/>
    </location>
</feature>
<feature type="disulfide bond" evidence="2 5">
    <location>
        <begin position="82"/>
        <end position="97"/>
    </location>
</feature>
<feature type="disulfide bond" evidence="2 5">
    <location>
        <begin position="91"/>
        <end position="110"/>
    </location>
</feature>
<feature type="disulfide bond" evidence="2 5">
    <location>
        <begin position="112"/>
        <end position="121"/>
    </location>
</feature>
<feature type="sequence conflict" description="In Ref. 4; AAL90431." evidence="7" ref="4">
    <original>Q</original>
    <variation>R</variation>
    <location>
        <position position="119"/>
    </location>
</feature>
<feature type="helix" evidence="8">
    <location>
        <begin position="84"/>
        <end position="89"/>
    </location>
</feature>
<feature type="strand" evidence="8">
    <location>
        <begin position="96"/>
        <end position="102"/>
    </location>
</feature>
<feature type="strand" evidence="8">
    <location>
        <begin position="105"/>
        <end position="111"/>
    </location>
</feature>
<feature type="strand" evidence="8">
    <location>
        <begin position="116"/>
        <end position="118"/>
    </location>
</feature>
<protein>
    <recommendedName>
        <fullName>Protein spitz</fullName>
    </recommendedName>
</protein>
<evidence type="ECO:0000255" key="1"/>
<evidence type="ECO:0000255" key="2">
    <source>
        <dbReference type="PROSITE-ProRule" id="PRU00076"/>
    </source>
</evidence>
<evidence type="ECO:0000256" key="3">
    <source>
        <dbReference type="SAM" id="MobiDB-lite"/>
    </source>
</evidence>
<evidence type="ECO:0000269" key="4">
    <source>
    </source>
</evidence>
<evidence type="ECO:0000269" key="5">
    <source>
    </source>
</evidence>
<evidence type="ECO:0000269" key="6">
    <source>
    </source>
</evidence>
<evidence type="ECO:0000305" key="7"/>
<evidence type="ECO:0007829" key="8">
    <source>
        <dbReference type="PDB" id="3CA7"/>
    </source>
</evidence>
<reference key="1">
    <citation type="journal article" date="1992" name="Genes Dev.">
        <title>The Drosophila spitz gene encodes a putative EGF-like growth factor involved in dorsal-ventral axis formation and neurogenesis.</title>
        <authorList>
            <person name="Rutledge B.J."/>
            <person name="Zhang K."/>
            <person name="Bier E."/>
            <person name="Jan Y.N."/>
            <person name="Perrimon N."/>
        </authorList>
    </citation>
    <scope>NUCLEOTIDE SEQUENCE [MRNA]</scope>
</reference>
<reference key="2">
    <citation type="journal article" date="2000" name="Science">
        <title>The genome sequence of Drosophila melanogaster.</title>
        <authorList>
            <person name="Adams M.D."/>
            <person name="Celniker S.E."/>
            <person name="Holt R.A."/>
            <person name="Evans C.A."/>
            <person name="Gocayne J.D."/>
            <person name="Amanatides P.G."/>
            <person name="Scherer S.E."/>
            <person name="Li P.W."/>
            <person name="Hoskins R.A."/>
            <person name="Galle R.F."/>
            <person name="George R.A."/>
            <person name="Lewis S.E."/>
            <person name="Richards S."/>
            <person name="Ashburner M."/>
            <person name="Henderson S.N."/>
            <person name="Sutton G.G."/>
            <person name="Wortman J.R."/>
            <person name="Yandell M.D."/>
            <person name="Zhang Q."/>
            <person name="Chen L.X."/>
            <person name="Brandon R.C."/>
            <person name="Rogers Y.-H.C."/>
            <person name="Blazej R.G."/>
            <person name="Champe M."/>
            <person name="Pfeiffer B.D."/>
            <person name="Wan K.H."/>
            <person name="Doyle C."/>
            <person name="Baxter E.G."/>
            <person name="Helt G."/>
            <person name="Nelson C.R."/>
            <person name="Miklos G.L.G."/>
            <person name="Abril J.F."/>
            <person name="Agbayani A."/>
            <person name="An H.-J."/>
            <person name="Andrews-Pfannkoch C."/>
            <person name="Baldwin D."/>
            <person name="Ballew R.M."/>
            <person name="Basu A."/>
            <person name="Baxendale J."/>
            <person name="Bayraktaroglu L."/>
            <person name="Beasley E.M."/>
            <person name="Beeson K.Y."/>
            <person name="Benos P.V."/>
            <person name="Berman B.P."/>
            <person name="Bhandari D."/>
            <person name="Bolshakov S."/>
            <person name="Borkova D."/>
            <person name="Botchan M.R."/>
            <person name="Bouck J."/>
            <person name="Brokstein P."/>
            <person name="Brottier P."/>
            <person name="Burtis K.C."/>
            <person name="Busam D.A."/>
            <person name="Butler H."/>
            <person name="Cadieu E."/>
            <person name="Center A."/>
            <person name="Chandra I."/>
            <person name="Cherry J.M."/>
            <person name="Cawley S."/>
            <person name="Dahlke C."/>
            <person name="Davenport L.B."/>
            <person name="Davies P."/>
            <person name="de Pablos B."/>
            <person name="Delcher A."/>
            <person name="Deng Z."/>
            <person name="Mays A.D."/>
            <person name="Dew I."/>
            <person name="Dietz S.M."/>
            <person name="Dodson K."/>
            <person name="Doup L.E."/>
            <person name="Downes M."/>
            <person name="Dugan-Rocha S."/>
            <person name="Dunkov B.C."/>
            <person name="Dunn P."/>
            <person name="Durbin K.J."/>
            <person name="Evangelista C.C."/>
            <person name="Ferraz C."/>
            <person name="Ferriera S."/>
            <person name="Fleischmann W."/>
            <person name="Fosler C."/>
            <person name="Gabrielian A.E."/>
            <person name="Garg N.S."/>
            <person name="Gelbart W.M."/>
            <person name="Glasser K."/>
            <person name="Glodek A."/>
            <person name="Gong F."/>
            <person name="Gorrell J.H."/>
            <person name="Gu Z."/>
            <person name="Guan P."/>
            <person name="Harris M."/>
            <person name="Harris N.L."/>
            <person name="Harvey D.A."/>
            <person name="Heiman T.J."/>
            <person name="Hernandez J.R."/>
            <person name="Houck J."/>
            <person name="Hostin D."/>
            <person name="Houston K.A."/>
            <person name="Howland T.J."/>
            <person name="Wei M.-H."/>
            <person name="Ibegwam C."/>
            <person name="Jalali M."/>
            <person name="Kalush F."/>
            <person name="Karpen G.H."/>
            <person name="Ke Z."/>
            <person name="Kennison J.A."/>
            <person name="Ketchum K.A."/>
            <person name="Kimmel B.E."/>
            <person name="Kodira C.D."/>
            <person name="Kraft C.L."/>
            <person name="Kravitz S."/>
            <person name="Kulp D."/>
            <person name="Lai Z."/>
            <person name="Lasko P."/>
            <person name="Lei Y."/>
            <person name="Levitsky A.A."/>
            <person name="Li J.H."/>
            <person name="Li Z."/>
            <person name="Liang Y."/>
            <person name="Lin X."/>
            <person name="Liu X."/>
            <person name="Mattei B."/>
            <person name="McIntosh T.C."/>
            <person name="McLeod M.P."/>
            <person name="McPherson D."/>
            <person name="Merkulov G."/>
            <person name="Milshina N.V."/>
            <person name="Mobarry C."/>
            <person name="Morris J."/>
            <person name="Moshrefi A."/>
            <person name="Mount S.M."/>
            <person name="Moy M."/>
            <person name="Murphy B."/>
            <person name="Murphy L."/>
            <person name="Muzny D.M."/>
            <person name="Nelson D.L."/>
            <person name="Nelson D.R."/>
            <person name="Nelson K.A."/>
            <person name="Nixon K."/>
            <person name="Nusskern D.R."/>
            <person name="Pacleb J.M."/>
            <person name="Palazzolo M."/>
            <person name="Pittman G.S."/>
            <person name="Pan S."/>
            <person name="Pollard J."/>
            <person name="Puri V."/>
            <person name="Reese M.G."/>
            <person name="Reinert K."/>
            <person name="Remington K."/>
            <person name="Saunders R.D.C."/>
            <person name="Scheeler F."/>
            <person name="Shen H."/>
            <person name="Shue B.C."/>
            <person name="Siden-Kiamos I."/>
            <person name="Simpson M."/>
            <person name="Skupski M.P."/>
            <person name="Smith T.J."/>
            <person name="Spier E."/>
            <person name="Spradling A.C."/>
            <person name="Stapleton M."/>
            <person name="Strong R."/>
            <person name="Sun E."/>
            <person name="Svirskas R."/>
            <person name="Tector C."/>
            <person name="Turner R."/>
            <person name="Venter E."/>
            <person name="Wang A.H."/>
            <person name="Wang X."/>
            <person name="Wang Z.-Y."/>
            <person name="Wassarman D.A."/>
            <person name="Weinstock G.M."/>
            <person name="Weissenbach J."/>
            <person name="Williams S.M."/>
            <person name="Woodage T."/>
            <person name="Worley K.C."/>
            <person name="Wu D."/>
            <person name="Yang S."/>
            <person name="Yao Q.A."/>
            <person name="Ye J."/>
            <person name="Yeh R.-F."/>
            <person name="Zaveri J.S."/>
            <person name="Zhan M."/>
            <person name="Zhang G."/>
            <person name="Zhao Q."/>
            <person name="Zheng L."/>
            <person name="Zheng X.H."/>
            <person name="Zhong F.N."/>
            <person name="Zhong W."/>
            <person name="Zhou X."/>
            <person name="Zhu S.C."/>
            <person name="Zhu X."/>
            <person name="Smith H.O."/>
            <person name="Gibbs R.A."/>
            <person name="Myers E.W."/>
            <person name="Rubin G.M."/>
            <person name="Venter J.C."/>
        </authorList>
    </citation>
    <scope>NUCLEOTIDE SEQUENCE [LARGE SCALE GENOMIC DNA]</scope>
    <source>
        <strain>Berkeley</strain>
    </source>
</reference>
<reference key="3">
    <citation type="journal article" date="2002" name="Genome Biol.">
        <title>Annotation of the Drosophila melanogaster euchromatic genome: a systematic review.</title>
        <authorList>
            <person name="Misra S."/>
            <person name="Crosby M.A."/>
            <person name="Mungall C.J."/>
            <person name="Matthews B.B."/>
            <person name="Campbell K.S."/>
            <person name="Hradecky P."/>
            <person name="Huang Y."/>
            <person name="Kaminker J.S."/>
            <person name="Millburn G.H."/>
            <person name="Prochnik S.E."/>
            <person name="Smith C.D."/>
            <person name="Tupy J.L."/>
            <person name="Whitfield E.J."/>
            <person name="Bayraktaroglu L."/>
            <person name="Berman B.P."/>
            <person name="Bettencourt B.R."/>
            <person name="Celniker S.E."/>
            <person name="de Grey A.D.N.J."/>
            <person name="Drysdale R.A."/>
            <person name="Harris N.L."/>
            <person name="Richter J."/>
            <person name="Russo S."/>
            <person name="Schroeder A.J."/>
            <person name="Shu S.Q."/>
            <person name="Stapleton M."/>
            <person name="Yamada C."/>
            <person name="Ashburner M."/>
            <person name="Gelbart W.M."/>
            <person name="Rubin G.M."/>
            <person name="Lewis S.E."/>
        </authorList>
    </citation>
    <scope>GENOME REANNOTATION</scope>
    <source>
        <strain>Berkeley</strain>
    </source>
</reference>
<reference key="4">
    <citation type="journal article" date="2002" name="Genome Biol.">
        <title>A Drosophila full-length cDNA resource.</title>
        <authorList>
            <person name="Stapleton M."/>
            <person name="Carlson J.W."/>
            <person name="Brokstein P."/>
            <person name="Yu C."/>
            <person name="Champe M."/>
            <person name="George R.A."/>
            <person name="Guarin H."/>
            <person name="Kronmiller B."/>
            <person name="Pacleb J.M."/>
            <person name="Park S."/>
            <person name="Wan K.H."/>
            <person name="Rubin G.M."/>
            <person name="Celniker S.E."/>
        </authorList>
    </citation>
    <scope>NUCLEOTIDE SEQUENCE [LARGE SCALE MRNA]</scope>
    <source>
        <strain>Berkeley</strain>
        <tissue>Head</tissue>
    </source>
</reference>
<reference key="5">
    <citation type="journal article" date="1994" name="Mech. Dev.">
        <title>The spitz gene is required for photoreceptor determination in the Drosophila eye where it interacts with the EGF receptor.</title>
        <authorList>
            <person name="Freeman M."/>
        </authorList>
    </citation>
    <scope>FUNCTION</scope>
</reference>
<reference key="6">
    <citation type="journal article" date="2001" name="Cell">
        <title>Regulated intracellular ligand transport and proteolysis control EGF signal activation in Drosophila.</title>
        <authorList>
            <person name="Lee J.R."/>
            <person name="Urban S."/>
            <person name="Garvey C.F."/>
            <person name="Freeman M."/>
        </authorList>
    </citation>
    <scope>SUBCELLULAR LOCATION</scope>
    <scope>PROTEOLYTIC PROCESSING</scope>
</reference>
<reference key="7">
    <citation type="journal article" date="2002" name="Curr. Biol.">
        <title>EGF receptor signalling: roles of Star and Rhomboid revealed.</title>
        <authorList>
            <person name="Klaembt C."/>
        </authorList>
    </citation>
    <scope>REVIEW</scope>
</reference>
<reference key="8">
    <citation type="journal article" date="2008" name="Nature">
        <title>Structural basis for EGFR ligand sequestration by Argos.</title>
        <authorList>
            <person name="Klein D.E."/>
            <person name="Stayrook S.E."/>
            <person name="Shi F."/>
            <person name="Narayan K."/>
            <person name="Lemmon M.A."/>
        </authorList>
    </citation>
    <scope>X-RAY CRYSTALLOGRAPHY (1.5 ANGSTROMS) OF 76-127 IN COMPLEX WITH ARGOS</scope>
    <scope>DISULFIDE BONDS</scope>
</reference>
<dbReference type="EMBL" id="M95199">
    <property type="protein sequence ID" value="AAA28894.1"/>
    <property type="status" value="ALT_INIT"/>
    <property type="molecule type" value="mRNA"/>
</dbReference>
<dbReference type="EMBL" id="AE014134">
    <property type="protein sequence ID" value="AAF53831.2"/>
    <property type="molecule type" value="Genomic_DNA"/>
</dbReference>
<dbReference type="EMBL" id="AY089693">
    <property type="protein sequence ID" value="AAL90431.1"/>
    <property type="molecule type" value="mRNA"/>
</dbReference>
<dbReference type="PIR" id="A44074">
    <property type="entry name" value="A44074"/>
</dbReference>
<dbReference type="RefSeq" id="NP_001027281.1">
    <property type="nucleotide sequence ID" value="NM_001032110.2"/>
</dbReference>
<dbReference type="RefSeq" id="NP_476909.2">
    <property type="nucleotide sequence ID" value="NM_057561.6"/>
</dbReference>
<dbReference type="RefSeq" id="NP_599118.2">
    <property type="nucleotide sequence ID" value="NM_134291.5"/>
</dbReference>
<dbReference type="RefSeq" id="NP_599119.2">
    <property type="nucleotide sequence ID" value="NM_134292.3"/>
</dbReference>
<dbReference type="RefSeq" id="NP_599120.2">
    <property type="nucleotide sequence ID" value="NM_134293.3"/>
</dbReference>
<dbReference type="PDB" id="3C9A">
    <property type="method" value="X-ray"/>
    <property type="resolution" value="1.60 A"/>
    <property type="chains" value="C/D=76-127"/>
</dbReference>
<dbReference type="PDB" id="3CA7">
    <property type="method" value="X-ray"/>
    <property type="resolution" value="1.50 A"/>
    <property type="chains" value="A=76-127"/>
</dbReference>
<dbReference type="PDB" id="3LTF">
    <property type="method" value="X-ray"/>
    <property type="resolution" value="3.20 A"/>
    <property type="chains" value="B/D=76-133"/>
</dbReference>
<dbReference type="PDB" id="3LTG">
    <property type="method" value="X-ray"/>
    <property type="resolution" value="3.40 A"/>
    <property type="chains" value="D=76-126"/>
</dbReference>
<dbReference type="PDBsum" id="3C9A"/>
<dbReference type="PDBsum" id="3CA7"/>
<dbReference type="PDBsum" id="3LTF"/>
<dbReference type="PDBsum" id="3LTG"/>
<dbReference type="SMR" id="Q01083"/>
<dbReference type="BioGRID" id="61229">
    <property type="interactions" value="75"/>
</dbReference>
<dbReference type="DIP" id="DIP-18037N"/>
<dbReference type="FunCoup" id="Q01083">
    <property type="interactions" value="107"/>
</dbReference>
<dbReference type="IntAct" id="Q01083">
    <property type="interactions" value="7"/>
</dbReference>
<dbReference type="STRING" id="7227.FBpp0080809"/>
<dbReference type="GlyCosmos" id="Q01083">
    <property type="glycosylation" value="1 site, No reported glycans"/>
</dbReference>
<dbReference type="GlyGen" id="Q01083">
    <property type="glycosylation" value="1 site"/>
</dbReference>
<dbReference type="SwissPalm" id="Q01083"/>
<dbReference type="PaxDb" id="7227-FBpp0080808"/>
<dbReference type="EnsemblMetazoa" id="FBtr0081267">
    <property type="protein sequence ID" value="FBpp0080808"/>
    <property type="gene ID" value="FBgn0005672"/>
</dbReference>
<dbReference type="EnsemblMetazoa" id="FBtr0081268">
    <property type="protein sequence ID" value="FBpp0080809"/>
    <property type="gene ID" value="FBgn0005672"/>
</dbReference>
<dbReference type="EnsemblMetazoa" id="FBtr0081269">
    <property type="protein sequence ID" value="FBpp0080810"/>
    <property type="gene ID" value="FBgn0005672"/>
</dbReference>
<dbReference type="EnsemblMetazoa" id="FBtr0081270">
    <property type="protein sequence ID" value="FBpp0080811"/>
    <property type="gene ID" value="FBgn0005672"/>
</dbReference>
<dbReference type="EnsemblMetazoa" id="FBtr0100597">
    <property type="protein sequence ID" value="FBpp0100054"/>
    <property type="gene ID" value="FBgn0005672"/>
</dbReference>
<dbReference type="GeneID" id="35253"/>
<dbReference type="KEGG" id="dme:Dmel_CG10334"/>
<dbReference type="UCSC" id="CG10334-RA">
    <property type="organism name" value="d. melanogaster"/>
</dbReference>
<dbReference type="AGR" id="FB:FBgn0005672"/>
<dbReference type="CTD" id="35253"/>
<dbReference type="FlyBase" id="FBgn0005672">
    <property type="gene designation" value="spi"/>
</dbReference>
<dbReference type="VEuPathDB" id="VectorBase:FBgn0005672"/>
<dbReference type="eggNOG" id="ENOG502S08N">
    <property type="taxonomic scope" value="Eukaryota"/>
</dbReference>
<dbReference type="GeneTree" id="ENSGT00520000062215"/>
<dbReference type="HOGENOM" id="CLU_096616_0_0_1"/>
<dbReference type="InParanoid" id="Q01083"/>
<dbReference type="OMA" id="DQCECCR"/>
<dbReference type="OrthoDB" id="6233064at2759"/>
<dbReference type="PhylomeDB" id="Q01083"/>
<dbReference type="SignaLink" id="Q01083"/>
<dbReference type="BioGRID-ORCS" id="35253">
    <property type="hits" value="0 hits in 1 CRISPR screen"/>
</dbReference>
<dbReference type="ChiTaRS" id="spi">
    <property type="organism name" value="fly"/>
</dbReference>
<dbReference type="EvolutionaryTrace" id="Q01083"/>
<dbReference type="GenomeRNAi" id="35253"/>
<dbReference type="PRO" id="PR:Q01083"/>
<dbReference type="Proteomes" id="UP000000803">
    <property type="component" value="Chromosome 2L"/>
</dbReference>
<dbReference type="Bgee" id="FBgn0005672">
    <property type="expression patterns" value="Expressed in eye disc (Drosophila) and 266 other cell types or tissues"/>
</dbReference>
<dbReference type="ExpressionAtlas" id="Q01083">
    <property type="expression patterns" value="baseline and differential"/>
</dbReference>
<dbReference type="GO" id="GO:0005783">
    <property type="term" value="C:endoplasmic reticulum"/>
    <property type="evidence" value="ECO:0000314"/>
    <property type="project" value="FlyBase"/>
</dbReference>
<dbReference type="GO" id="GO:0005789">
    <property type="term" value="C:endoplasmic reticulum membrane"/>
    <property type="evidence" value="ECO:0007669"/>
    <property type="project" value="UniProtKB-SubCell"/>
</dbReference>
<dbReference type="GO" id="GO:0005615">
    <property type="term" value="C:extracellular space"/>
    <property type="evidence" value="ECO:0000314"/>
    <property type="project" value="FlyBase"/>
</dbReference>
<dbReference type="GO" id="GO:0000139">
    <property type="term" value="C:Golgi membrane"/>
    <property type="evidence" value="ECO:0007669"/>
    <property type="project" value="UniProtKB-SubCell"/>
</dbReference>
<dbReference type="GO" id="GO:0016020">
    <property type="term" value="C:membrane"/>
    <property type="evidence" value="ECO:0000314"/>
    <property type="project" value="FlyBase"/>
</dbReference>
<dbReference type="GO" id="GO:0005886">
    <property type="term" value="C:plasma membrane"/>
    <property type="evidence" value="ECO:0007669"/>
    <property type="project" value="UniProtKB-SubCell"/>
</dbReference>
<dbReference type="GO" id="GO:0005154">
    <property type="term" value="F:epidermal growth factor receptor binding"/>
    <property type="evidence" value="ECO:0000314"/>
    <property type="project" value="FlyBase"/>
</dbReference>
<dbReference type="GO" id="GO:0048018">
    <property type="term" value="F:receptor ligand activity"/>
    <property type="evidence" value="ECO:0000314"/>
    <property type="project" value="FlyBase"/>
</dbReference>
<dbReference type="GO" id="GO:0030297">
    <property type="term" value="F:transmembrane receptor protein tyrosine kinase activator activity"/>
    <property type="evidence" value="ECO:0000314"/>
    <property type="project" value="FlyBase"/>
</dbReference>
<dbReference type="GO" id="GO:0048149">
    <property type="term" value="P:behavioral response to ethanol"/>
    <property type="evidence" value="ECO:0000315"/>
    <property type="project" value="FlyBase"/>
</dbReference>
<dbReference type="GO" id="GO:0007298">
    <property type="term" value="P:border follicle cell migration"/>
    <property type="evidence" value="ECO:0000315"/>
    <property type="project" value="FlyBase"/>
</dbReference>
<dbReference type="GO" id="GO:0007166">
    <property type="term" value="P:cell surface receptor signaling pathway"/>
    <property type="evidence" value="ECO:0000318"/>
    <property type="project" value="GO_Central"/>
</dbReference>
<dbReference type="GO" id="GO:0035225">
    <property type="term" value="P:determination of genital disc primordium"/>
    <property type="evidence" value="ECO:0000315"/>
    <property type="project" value="FlyBase"/>
</dbReference>
<dbReference type="GO" id="GO:0007391">
    <property type="term" value="P:dorsal closure"/>
    <property type="evidence" value="ECO:0000315"/>
    <property type="project" value="UniProtKB"/>
</dbReference>
<dbReference type="GO" id="GO:0001713">
    <property type="term" value="P:ectodermal cell fate determination"/>
    <property type="evidence" value="ECO:0000315"/>
    <property type="project" value="FlyBase"/>
</dbReference>
<dbReference type="GO" id="GO:0007173">
    <property type="term" value="P:epidermal growth factor receptor signaling pathway"/>
    <property type="evidence" value="ECO:0000314"/>
    <property type="project" value="FlyBase"/>
</dbReference>
<dbReference type="GO" id="GO:0061331">
    <property type="term" value="P:epithelial cell proliferation involved in Malpighian tubule morphogenesis"/>
    <property type="evidence" value="ECO:0000315"/>
    <property type="project" value="FlyBase"/>
</dbReference>
<dbReference type="GO" id="GO:0003015">
    <property type="term" value="P:heart process"/>
    <property type="evidence" value="ECO:0000315"/>
    <property type="project" value="FlyBase"/>
</dbReference>
<dbReference type="GO" id="GO:0007476">
    <property type="term" value="P:imaginal disc-derived wing morphogenesis"/>
    <property type="evidence" value="ECO:0000315"/>
    <property type="project" value="FlyBase"/>
</dbReference>
<dbReference type="GO" id="GO:0043066">
    <property type="term" value="P:negative regulation of apoptotic process"/>
    <property type="evidence" value="ECO:0000315"/>
    <property type="project" value="FlyBase"/>
</dbReference>
<dbReference type="GO" id="GO:0010629">
    <property type="term" value="P:negative regulation of gene expression"/>
    <property type="evidence" value="ECO:0000315"/>
    <property type="project" value="UniProtKB"/>
</dbReference>
<dbReference type="GO" id="GO:0007438">
    <property type="term" value="P:oenocyte development"/>
    <property type="evidence" value="ECO:0000315"/>
    <property type="project" value="FlyBase"/>
</dbReference>
<dbReference type="GO" id="GO:0008355">
    <property type="term" value="P:olfactory learning"/>
    <property type="evidence" value="ECO:0000315"/>
    <property type="project" value="FlyBase"/>
</dbReference>
<dbReference type="GO" id="GO:0016318">
    <property type="term" value="P:ommatidial rotation"/>
    <property type="evidence" value="ECO:0000315"/>
    <property type="project" value="FlyBase"/>
</dbReference>
<dbReference type="GO" id="GO:0007422">
    <property type="term" value="P:peripheral nervous system development"/>
    <property type="evidence" value="ECO:0000315"/>
    <property type="project" value="FlyBase"/>
</dbReference>
<dbReference type="GO" id="GO:0046530">
    <property type="term" value="P:photoreceptor cell differentiation"/>
    <property type="evidence" value="ECO:0000315"/>
    <property type="project" value="FlyBase"/>
</dbReference>
<dbReference type="GO" id="GO:0043703">
    <property type="term" value="P:photoreceptor cell fate determination"/>
    <property type="evidence" value="ECO:0000316"/>
    <property type="project" value="FlyBase"/>
</dbReference>
<dbReference type="GO" id="GO:1903688">
    <property type="term" value="P:positive regulation of border follicle cell migration"/>
    <property type="evidence" value="ECO:0000315"/>
    <property type="project" value="FlyBase"/>
</dbReference>
<dbReference type="GO" id="GO:0008284">
    <property type="term" value="P:positive regulation of cell population proliferation"/>
    <property type="evidence" value="ECO:0000315"/>
    <property type="project" value="FlyBase"/>
</dbReference>
<dbReference type="GO" id="GO:0070374">
    <property type="term" value="P:positive regulation of ERK1 and ERK2 cascade"/>
    <property type="evidence" value="ECO:0000314"/>
    <property type="project" value="FlyBase"/>
</dbReference>
<dbReference type="GO" id="GO:0050769">
    <property type="term" value="P:positive regulation of neurogenesis"/>
    <property type="evidence" value="ECO:0000315"/>
    <property type="project" value="FlyBase"/>
</dbReference>
<dbReference type="GO" id="GO:0035277">
    <property type="term" value="P:spiracle morphogenesis, open tracheal system"/>
    <property type="evidence" value="ECO:0000315"/>
    <property type="project" value="FlyBase"/>
</dbReference>
<dbReference type="GO" id="GO:0048865">
    <property type="term" value="P:stem cell fate commitment"/>
    <property type="evidence" value="ECO:0000315"/>
    <property type="project" value="FlyBase"/>
</dbReference>
<dbReference type="GO" id="GO:0007421">
    <property type="term" value="P:stomatogastric nervous system development"/>
    <property type="evidence" value="ECO:0000315"/>
    <property type="project" value="FlyBase"/>
</dbReference>
<dbReference type="FunFam" id="2.10.25.10:FF:000664">
    <property type="entry name" value="Blast:Protein spitz"/>
    <property type="match status" value="1"/>
</dbReference>
<dbReference type="Gene3D" id="2.10.25.10">
    <property type="entry name" value="Laminin"/>
    <property type="match status" value="1"/>
</dbReference>
<dbReference type="InterPro" id="IPR000742">
    <property type="entry name" value="EGF-like_dom"/>
</dbReference>
<dbReference type="InterPro" id="IPR043403">
    <property type="entry name" value="Gurken/Spitz"/>
</dbReference>
<dbReference type="PANTHER" id="PTHR12332">
    <property type="entry name" value="KEREN-RELATED"/>
    <property type="match status" value="1"/>
</dbReference>
<dbReference type="PANTHER" id="PTHR12332:SF1">
    <property type="entry name" value="KEREN-RELATED"/>
    <property type="match status" value="1"/>
</dbReference>
<dbReference type="SMART" id="SM00181">
    <property type="entry name" value="EGF"/>
    <property type="match status" value="1"/>
</dbReference>
<dbReference type="SUPFAM" id="SSF57196">
    <property type="entry name" value="EGF/Laminin"/>
    <property type="match status" value="1"/>
</dbReference>
<dbReference type="PROSITE" id="PS00022">
    <property type="entry name" value="EGF_1"/>
    <property type="match status" value="1"/>
</dbReference>
<dbReference type="PROSITE" id="PS01186">
    <property type="entry name" value="EGF_2"/>
    <property type="match status" value="1"/>
</dbReference>
<dbReference type="PROSITE" id="PS50026">
    <property type="entry name" value="EGF_3"/>
    <property type="match status" value="1"/>
</dbReference>
<keyword id="KW-0002">3D-structure</keyword>
<keyword id="KW-1003">Cell membrane</keyword>
<keyword id="KW-0217">Developmental protein</keyword>
<keyword id="KW-0221">Differentiation</keyword>
<keyword id="KW-1015">Disulfide bond</keyword>
<keyword id="KW-0245">EGF-like domain</keyword>
<keyword id="KW-0256">Endoplasmic reticulum</keyword>
<keyword id="KW-0325">Glycoprotein</keyword>
<keyword id="KW-0333">Golgi apparatus</keyword>
<keyword id="KW-0472">Membrane</keyword>
<keyword id="KW-0524">Neurogenesis</keyword>
<keyword id="KW-1185">Reference proteome</keyword>
<keyword id="KW-0732">Signal</keyword>
<keyword id="KW-0812">Transmembrane</keyword>
<keyword id="KW-1133">Transmembrane helix</keyword>
<gene>
    <name type="primary">spi</name>
    <name type="ORF">CG10334</name>
</gene>